<proteinExistence type="evidence at protein level"/>
<evidence type="ECO:0000250" key="1"/>
<evidence type="ECO:0000250" key="2">
    <source>
        <dbReference type="UniProtKB" id="P0C0S5"/>
    </source>
</evidence>
<evidence type="ECO:0000250" key="3">
    <source>
        <dbReference type="UniProtKB" id="Q71UI9"/>
    </source>
</evidence>
<evidence type="ECO:0000256" key="4">
    <source>
        <dbReference type="SAM" id="MobiDB-lite"/>
    </source>
</evidence>
<evidence type="ECO:0000269" key="5">
    <source>
    </source>
</evidence>
<evidence type="ECO:0000305" key="6"/>
<accession>P02272</accession>
<comment type="function">
    <text evidence="1 5">Variant histone H2A which replaces conventional H2A in a subset of nucleosomes. Nucleosomes wrap and compact DNA into chromatin, limiting DNA accessibility to the cellular machineries which require DNA as a template. Histones thereby play a central role in transcription regulation, DNA repair, DNA replication and chromosomal stability. DNA accessibility is regulated via a complex set of post-translational modifications of histones, also called histone code, and nucleosome remodeling. May be involved in the formation of constitutive heterochromatin. May be required for chromosome segregation during cell division (By similarity).</text>
</comment>
<comment type="subunit">
    <text evidence="1">The nucleosome is a histone octamer containing two molecules each of H2A, H2B, H3 and H4 assembled in one H3-H4 heterotetramer and two H2A-H2B heterodimers. The octamer wraps approximately 147 bp of DNA. H2A or its variant H2AF forms a heterodimer with H2B (By similarity).</text>
</comment>
<comment type="subcellular location">
    <subcellularLocation>
        <location>Nucleus</location>
    </subcellularLocation>
    <subcellularLocation>
        <location>Chromosome</location>
    </subcellularLocation>
</comment>
<comment type="developmental stage">
    <text>Expressed in the chicken embryo.</text>
</comment>
<comment type="PTM">
    <text evidence="1">Monoubiquitination of Lys-122 gives a specific tag for epigenetic transcriptional repression.</text>
</comment>
<comment type="PTM">
    <text evidence="5">Acetylated on Lys-5, Lys-8 and Lys-12 when associated with the 5'-end of active genes.</text>
</comment>
<comment type="similarity">
    <text evidence="6">Belongs to the histone H2A family.</text>
</comment>
<dbReference type="EMBL" id="V00414">
    <property type="protein sequence ID" value="CAA23705.1"/>
    <property type="molecule type" value="mRNA"/>
</dbReference>
<dbReference type="EMBL" id="X13894">
    <property type="protein sequence ID" value="CAA32094.1"/>
    <property type="status" value="ALT_SEQ"/>
    <property type="molecule type" value="Genomic_DNA"/>
</dbReference>
<dbReference type="PIR" id="S03282">
    <property type="entry name" value="HSCH2F"/>
</dbReference>
<dbReference type="RefSeq" id="NP_001383537.1">
    <property type="nucleotide sequence ID" value="NM_001396608.1"/>
</dbReference>
<dbReference type="RefSeq" id="XP_015128745.1">
    <property type="nucleotide sequence ID" value="XM_015273259.1"/>
</dbReference>
<dbReference type="SMR" id="P02272"/>
<dbReference type="FunCoup" id="P02272">
    <property type="interactions" value="2575"/>
</dbReference>
<dbReference type="STRING" id="9031.ENSGALP00000064273"/>
<dbReference type="iPTMnet" id="P02272"/>
<dbReference type="GeneID" id="426617"/>
<dbReference type="KEGG" id="gga:426617"/>
<dbReference type="VEuPathDB" id="HostDB:geneid_426617"/>
<dbReference type="InParanoid" id="P02272"/>
<dbReference type="OMA" id="MNKKGAP"/>
<dbReference type="OrthoDB" id="9421954at2759"/>
<dbReference type="PhylomeDB" id="P02272"/>
<dbReference type="Reactome" id="R-GGA-201722">
    <property type="pathway name" value="Formation of the beta-catenin:TCF transactivating complex"/>
</dbReference>
<dbReference type="Reactome" id="R-GGA-212300">
    <property type="pathway name" value="PRC2 methylates histones and DNA"/>
</dbReference>
<dbReference type="Reactome" id="R-GGA-2299718">
    <property type="pathway name" value="Condensation of Prophase Chromosomes"/>
</dbReference>
<dbReference type="Reactome" id="R-GGA-2559580">
    <property type="pathway name" value="Oxidative Stress Induced Senescence"/>
</dbReference>
<dbReference type="Reactome" id="R-GGA-5250924">
    <property type="pathway name" value="B-WICH complex positively regulates rRNA expression"/>
</dbReference>
<dbReference type="Reactome" id="R-GGA-5578749">
    <property type="pathway name" value="Transcriptional regulation by small RNAs"/>
</dbReference>
<dbReference type="Reactome" id="R-GGA-5625886">
    <property type="pathway name" value="Activated PKN1 stimulates transcription of AR (androgen receptor) regulated genes KLK2 and KLK3"/>
</dbReference>
<dbReference type="Reactome" id="R-GGA-606279">
    <property type="pathway name" value="Deposition of new CENPA-containing nucleosomes at the centromere"/>
</dbReference>
<dbReference type="Reactome" id="R-GGA-68616">
    <property type="pathway name" value="Assembly of the ORC complex at the origin of replication"/>
</dbReference>
<dbReference type="Reactome" id="R-GGA-73728">
    <property type="pathway name" value="RNA Polymerase I Promoter Opening"/>
</dbReference>
<dbReference type="Reactome" id="R-GGA-73772">
    <property type="pathway name" value="RNA Polymerase I Promoter Escape"/>
</dbReference>
<dbReference type="Reactome" id="R-GGA-8936459">
    <property type="pathway name" value="RUNX1 regulates genes involved in megakaryocyte differentiation and platelet function"/>
</dbReference>
<dbReference type="Reactome" id="R-GGA-9018519">
    <property type="pathway name" value="Estrogen-dependent gene expression"/>
</dbReference>
<dbReference type="Reactome" id="R-GGA-9841922">
    <property type="pathway name" value="MLL4 and MLL3 complexes regulate expression of PPARG target genes in adipogenesis and hepatic steatosis"/>
</dbReference>
<dbReference type="Reactome" id="R-GGA-9843940">
    <property type="pathway name" value="Regulation of endogenous retroelements by KRAB-ZFP proteins"/>
</dbReference>
<dbReference type="Reactome" id="R-GGA-9843970">
    <property type="pathway name" value="Regulation of endogenous retroelements by the Human Silencing Hub (HUSH) complex"/>
</dbReference>
<dbReference type="PRO" id="PR:P02272"/>
<dbReference type="Proteomes" id="UP000000539">
    <property type="component" value="Chromosome 22"/>
</dbReference>
<dbReference type="Bgee" id="ENSGALG00000033447">
    <property type="expression patterns" value="Expressed in granulocyte and 13 other cell types or tissues"/>
</dbReference>
<dbReference type="GO" id="GO:0000786">
    <property type="term" value="C:nucleosome"/>
    <property type="evidence" value="ECO:0000318"/>
    <property type="project" value="GO_Central"/>
</dbReference>
<dbReference type="GO" id="GO:0005634">
    <property type="term" value="C:nucleus"/>
    <property type="evidence" value="ECO:0000318"/>
    <property type="project" value="GO_Central"/>
</dbReference>
<dbReference type="GO" id="GO:0003677">
    <property type="term" value="F:DNA binding"/>
    <property type="evidence" value="ECO:0007669"/>
    <property type="project" value="UniProtKB-KW"/>
</dbReference>
<dbReference type="GO" id="GO:0046982">
    <property type="term" value="F:protein heterodimerization activity"/>
    <property type="evidence" value="ECO:0007669"/>
    <property type="project" value="InterPro"/>
</dbReference>
<dbReference type="GO" id="GO:0030527">
    <property type="term" value="F:structural constituent of chromatin"/>
    <property type="evidence" value="ECO:0000318"/>
    <property type="project" value="GO_Central"/>
</dbReference>
<dbReference type="GO" id="GO:0031507">
    <property type="term" value="P:heterochromatin formation"/>
    <property type="evidence" value="ECO:0000318"/>
    <property type="project" value="GO_Central"/>
</dbReference>
<dbReference type="CDD" id="cd00074">
    <property type="entry name" value="HFD_H2A"/>
    <property type="match status" value="1"/>
</dbReference>
<dbReference type="FunFam" id="1.10.20.10:FF:000005">
    <property type="entry name" value="Histone H2A"/>
    <property type="match status" value="1"/>
</dbReference>
<dbReference type="Gene3D" id="1.10.20.10">
    <property type="entry name" value="Histone, subunit A"/>
    <property type="match status" value="1"/>
</dbReference>
<dbReference type="InterPro" id="IPR009072">
    <property type="entry name" value="Histone-fold"/>
</dbReference>
<dbReference type="InterPro" id="IPR002119">
    <property type="entry name" value="Histone_H2A"/>
</dbReference>
<dbReference type="InterPro" id="IPR007125">
    <property type="entry name" value="Histone_H2A/H2B/H3"/>
</dbReference>
<dbReference type="InterPro" id="IPR032454">
    <property type="entry name" value="Histone_H2A_C"/>
</dbReference>
<dbReference type="InterPro" id="IPR032458">
    <property type="entry name" value="Histone_H2A_CS"/>
</dbReference>
<dbReference type="PANTHER" id="PTHR23430">
    <property type="entry name" value="HISTONE H2A"/>
    <property type="match status" value="1"/>
</dbReference>
<dbReference type="Pfam" id="PF00125">
    <property type="entry name" value="Histone"/>
    <property type="match status" value="1"/>
</dbReference>
<dbReference type="Pfam" id="PF16211">
    <property type="entry name" value="Histone_H2A_C"/>
    <property type="match status" value="1"/>
</dbReference>
<dbReference type="PRINTS" id="PR00620">
    <property type="entry name" value="HISTONEH2A"/>
</dbReference>
<dbReference type="SMART" id="SM00414">
    <property type="entry name" value="H2A"/>
    <property type="match status" value="1"/>
</dbReference>
<dbReference type="SUPFAM" id="SSF47113">
    <property type="entry name" value="Histone-fold"/>
    <property type="match status" value="1"/>
</dbReference>
<dbReference type="PROSITE" id="PS00046">
    <property type="entry name" value="HISTONE_H2A"/>
    <property type="match status" value="1"/>
</dbReference>
<feature type="initiator methionine" description="Removed" evidence="1">
    <location>
        <position position="1"/>
    </location>
</feature>
<feature type="chain" id="PRO_0000055308" description="Histone H2A.V">
    <location>
        <begin position="2"/>
        <end position="128"/>
    </location>
</feature>
<feature type="region of interest" description="Disordered" evidence="4">
    <location>
        <begin position="1"/>
        <end position="23"/>
    </location>
</feature>
<feature type="compositionally biased region" description="Basic and acidic residues" evidence="4">
    <location>
        <begin position="1"/>
        <end position="12"/>
    </location>
</feature>
<feature type="modified residue" description="N6-acetyllysine" evidence="5">
    <location>
        <position position="5"/>
    </location>
</feature>
<feature type="modified residue" description="N6-acetyllysine" evidence="5">
    <location>
        <position position="8"/>
    </location>
</feature>
<feature type="modified residue" description="N6-acetyllysine" evidence="5">
    <location>
        <position position="12"/>
    </location>
</feature>
<feature type="modified residue" description="N6-lactoyllysine; alternate" evidence="2">
    <location>
        <position position="12"/>
    </location>
</feature>
<feature type="modified residue" description="N6-lactoyllysine; alternate" evidence="2">
    <location>
        <position position="14"/>
    </location>
</feature>
<feature type="modified residue" description="N6-lactoyllysine" evidence="2">
    <location>
        <position position="116"/>
    </location>
</feature>
<feature type="cross-link" description="Glycyl lysine isopeptide (Lys-Gly) (interchain with G-Cter in ubiquitin)" evidence="1">
    <location>
        <position position="122"/>
    </location>
</feature>
<gene>
    <name evidence="3" type="primary">H2AZ2</name>
    <name type="synonym">H2AF</name>
</gene>
<keyword id="KW-0007">Acetylation</keyword>
<keyword id="KW-0158">Chromosome</keyword>
<keyword id="KW-0238">DNA-binding</keyword>
<keyword id="KW-1017">Isopeptide bond</keyword>
<keyword id="KW-0544">Nucleosome core</keyword>
<keyword id="KW-0539">Nucleus</keyword>
<keyword id="KW-1185">Reference proteome</keyword>
<keyword id="KW-0832">Ubl conjugation</keyword>
<sequence>MAGGKAGKDSGKAKAKAVSRSQRAGLQFPVGRIHRHLKTRTTSHGRVGATAAVYSAAILEYLTAEVLELAGNASKDLKVKRITPRHLQLAIRGDEELDSLIKATIAGGGVIPHIHKSLIGKKGQQKTA</sequence>
<reference key="1">
    <citation type="journal article" date="1983" name="Proc. Natl. Acad. Sci. U.S.A.">
        <title>H2A.F: an extremely variant histone H2A sequence expressed in the chicken embryo.</title>
        <authorList>
            <person name="Harvey R.P."/>
            <person name="Whiting J.A."/>
            <person name="Coles L.S."/>
            <person name="Krieg P.A."/>
            <person name="Wells J.R.E."/>
        </authorList>
    </citation>
    <scope>NUCLEOTIDE SEQUENCE [MRNA]</scope>
</reference>
<reference key="2">
    <citation type="journal article" date="1989" name="Nucleic Acids Res.">
        <title>Transcription from the intron-containing chicken histone H2A.F gene is not S-phase regulated.</title>
        <authorList>
            <person name="Dalton S."/>
            <person name="Robins A.J."/>
            <person name="Harvey R.P."/>
            <person name="Wells J.R.E."/>
        </authorList>
    </citation>
    <scope>NUCLEOTIDE SEQUENCE [MRNA]</scope>
</reference>
<reference key="3">
    <citation type="journal article" date="2005" name="Nucleic Acids Res.">
        <title>The replacement histone H2A.Z in a hyperacetylated form is a feature of active genes in the chicken.</title>
        <authorList>
            <person name="Bruce K."/>
            <person name="Myers F.A."/>
            <person name="Mantouvalou E."/>
            <person name="Lefevre P."/>
            <person name="Greaves I."/>
            <person name="Bonifer C."/>
            <person name="Tremethick D.J."/>
            <person name="Thorne A.W."/>
            <person name="Crane-Robinson C."/>
        </authorList>
    </citation>
    <scope>FUNCTION</scope>
    <scope>ACETYLATION AT LYS-5; LYS-8 AND LYS-12</scope>
</reference>
<reference key="4">
    <citation type="journal article" date="2005" name="Proc. Natl. Acad. Sci. U.S.A.">
        <title>Protein identification using sequential ion/ion reactions and tandem mass spectrometry.</title>
        <authorList>
            <person name="Coon J.J."/>
            <person name="Ueberheide B."/>
            <person name="Syka J.E.P."/>
            <person name="Dryhurst D.D."/>
            <person name="Ausio J."/>
            <person name="Shabanowitz J."/>
            <person name="Hunt D.F."/>
        </authorList>
    </citation>
    <scope>IDENTIFICATION BY MASS SPECTROMETRY</scope>
</reference>
<protein>
    <recommendedName>
        <fullName>Histone H2A.V</fullName>
    </recommendedName>
    <alternativeName>
        <fullName>H2A.F/Z</fullName>
    </alternativeName>
</protein>
<name>H2AV_CHICK</name>
<organism>
    <name type="scientific">Gallus gallus</name>
    <name type="common">Chicken</name>
    <dbReference type="NCBI Taxonomy" id="9031"/>
    <lineage>
        <taxon>Eukaryota</taxon>
        <taxon>Metazoa</taxon>
        <taxon>Chordata</taxon>
        <taxon>Craniata</taxon>
        <taxon>Vertebrata</taxon>
        <taxon>Euteleostomi</taxon>
        <taxon>Archelosauria</taxon>
        <taxon>Archosauria</taxon>
        <taxon>Dinosauria</taxon>
        <taxon>Saurischia</taxon>
        <taxon>Theropoda</taxon>
        <taxon>Coelurosauria</taxon>
        <taxon>Aves</taxon>
        <taxon>Neognathae</taxon>
        <taxon>Galloanserae</taxon>
        <taxon>Galliformes</taxon>
        <taxon>Phasianidae</taxon>
        <taxon>Phasianinae</taxon>
        <taxon>Gallus</taxon>
    </lineage>
</organism>